<dbReference type="EC" id="2.7.7.3" evidence="1"/>
<dbReference type="EMBL" id="CP000240">
    <property type="protein sequence ID" value="ABD03141.1"/>
    <property type="molecule type" value="Genomic_DNA"/>
</dbReference>
<dbReference type="RefSeq" id="WP_011433776.1">
    <property type="nucleotide sequence ID" value="NC_007776.1"/>
</dbReference>
<dbReference type="SMR" id="Q2JJM6"/>
<dbReference type="STRING" id="321332.CYB_2196"/>
<dbReference type="KEGG" id="cyb:CYB_2196"/>
<dbReference type="eggNOG" id="COG0669">
    <property type="taxonomic scope" value="Bacteria"/>
</dbReference>
<dbReference type="HOGENOM" id="CLU_100149_0_1_3"/>
<dbReference type="OrthoDB" id="9806661at2"/>
<dbReference type="UniPathway" id="UPA00241">
    <property type="reaction ID" value="UER00355"/>
</dbReference>
<dbReference type="Proteomes" id="UP000001938">
    <property type="component" value="Chromosome"/>
</dbReference>
<dbReference type="GO" id="GO:0005737">
    <property type="term" value="C:cytoplasm"/>
    <property type="evidence" value="ECO:0007669"/>
    <property type="project" value="UniProtKB-SubCell"/>
</dbReference>
<dbReference type="GO" id="GO:0005524">
    <property type="term" value="F:ATP binding"/>
    <property type="evidence" value="ECO:0007669"/>
    <property type="project" value="UniProtKB-KW"/>
</dbReference>
<dbReference type="GO" id="GO:0004595">
    <property type="term" value="F:pantetheine-phosphate adenylyltransferase activity"/>
    <property type="evidence" value="ECO:0007669"/>
    <property type="project" value="UniProtKB-UniRule"/>
</dbReference>
<dbReference type="GO" id="GO:0015937">
    <property type="term" value="P:coenzyme A biosynthetic process"/>
    <property type="evidence" value="ECO:0007669"/>
    <property type="project" value="UniProtKB-UniRule"/>
</dbReference>
<dbReference type="CDD" id="cd02163">
    <property type="entry name" value="PPAT"/>
    <property type="match status" value="1"/>
</dbReference>
<dbReference type="Gene3D" id="3.40.50.620">
    <property type="entry name" value="HUPs"/>
    <property type="match status" value="1"/>
</dbReference>
<dbReference type="HAMAP" id="MF_00151">
    <property type="entry name" value="PPAT_bact"/>
    <property type="match status" value="1"/>
</dbReference>
<dbReference type="InterPro" id="IPR004821">
    <property type="entry name" value="Cyt_trans-like"/>
</dbReference>
<dbReference type="InterPro" id="IPR001980">
    <property type="entry name" value="PPAT"/>
</dbReference>
<dbReference type="InterPro" id="IPR014729">
    <property type="entry name" value="Rossmann-like_a/b/a_fold"/>
</dbReference>
<dbReference type="NCBIfam" id="TIGR01510">
    <property type="entry name" value="coaD_prev_kdtB"/>
    <property type="match status" value="1"/>
</dbReference>
<dbReference type="NCBIfam" id="TIGR00125">
    <property type="entry name" value="cyt_tran_rel"/>
    <property type="match status" value="1"/>
</dbReference>
<dbReference type="PANTHER" id="PTHR21342">
    <property type="entry name" value="PHOSPHOPANTETHEINE ADENYLYLTRANSFERASE"/>
    <property type="match status" value="1"/>
</dbReference>
<dbReference type="PANTHER" id="PTHR21342:SF1">
    <property type="entry name" value="PHOSPHOPANTETHEINE ADENYLYLTRANSFERASE"/>
    <property type="match status" value="1"/>
</dbReference>
<dbReference type="Pfam" id="PF01467">
    <property type="entry name" value="CTP_transf_like"/>
    <property type="match status" value="1"/>
</dbReference>
<dbReference type="PRINTS" id="PR01020">
    <property type="entry name" value="LPSBIOSNTHSS"/>
</dbReference>
<dbReference type="SUPFAM" id="SSF52374">
    <property type="entry name" value="Nucleotidylyl transferase"/>
    <property type="match status" value="1"/>
</dbReference>
<organism>
    <name type="scientific">Synechococcus sp. (strain JA-2-3B'a(2-13))</name>
    <name type="common">Cyanobacteria bacterium Yellowstone B-Prime</name>
    <dbReference type="NCBI Taxonomy" id="321332"/>
    <lineage>
        <taxon>Bacteria</taxon>
        <taxon>Bacillati</taxon>
        <taxon>Cyanobacteriota</taxon>
        <taxon>Cyanophyceae</taxon>
        <taxon>Synechococcales</taxon>
        <taxon>Synechococcaceae</taxon>
        <taxon>Synechococcus</taxon>
    </lineage>
</organism>
<gene>
    <name evidence="1" type="primary">coaD</name>
    <name type="ordered locus">CYB_2196</name>
</gene>
<proteinExistence type="inferred from homology"/>
<reference key="1">
    <citation type="journal article" date="2007" name="ISME J.">
        <title>Population level functional diversity in a microbial community revealed by comparative genomic and metagenomic analyses.</title>
        <authorList>
            <person name="Bhaya D."/>
            <person name="Grossman A.R."/>
            <person name="Steunou A.-S."/>
            <person name="Khuri N."/>
            <person name="Cohan F.M."/>
            <person name="Hamamura N."/>
            <person name="Melendrez M.C."/>
            <person name="Bateson M.M."/>
            <person name="Ward D.M."/>
            <person name="Heidelberg J.F."/>
        </authorList>
    </citation>
    <scope>NUCLEOTIDE SEQUENCE [LARGE SCALE GENOMIC DNA]</scope>
    <source>
        <strain>JA-2-3B'a(2-13)</strain>
    </source>
</reference>
<protein>
    <recommendedName>
        <fullName evidence="1">Phosphopantetheine adenylyltransferase</fullName>
        <ecNumber evidence="1">2.7.7.3</ecNumber>
    </recommendedName>
    <alternativeName>
        <fullName evidence="1">Dephospho-CoA pyrophosphorylase</fullName>
    </alternativeName>
    <alternativeName>
        <fullName evidence="1">Pantetheine-phosphate adenylyltransferase</fullName>
        <shortName evidence="1">PPAT</shortName>
    </alternativeName>
</protein>
<accession>Q2JJM6</accession>
<feature type="chain" id="PRO_1000011261" description="Phosphopantetheine adenylyltransferase">
    <location>
        <begin position="1"/>
        <end position="159"/>
    </location>
</feature>
<feature type="binding site" evidence="1">
    <location>
        <begin position="8"/>
        <end position="9"/>
    </location>
    <ligand>
        <name>ATP</name>
        <dbReference type="ChEBI" id="CHEBI:30616"/>
    </ligand>
</feature>
<feature type="binding site" evidence="1">
    <location>
        <position position="8"/>
    </location>
    <ligand>
        <name>substrate</name>
    </ligand>
</feature>
<feature type="binding site" evidence="1">
    <location>
        <position position="16"/>
    </location>
    <ligand>
        <name>ATP</name>
        <dbReference type="ChEBI" id="CHEBI:30616"/>
    </ligand>
</feature>
<feature type="binding site" evidence="1">
    <location>
        <position position="40"/>
    </location>
    <ligand>
        <name>substrate</name>
    </ligand>
</feature>
<feature type="binding site" evidence="1">
    <location>
        <position position="72"/>
    </location>
    <ligand>
        <name>substrate</name>
    </ligand>
</feature>
<feature type="binding site" evidence="1">
    <location>
        <position position="86"/>
    </location>
    <ligand>
        <name>substrate</name>
    </ligand>
</feature>
<feature type="binding site" evidence="1">
    <location>
        <begin position="87"/>
        <end position="89"/>
    </location>
    <ligand>
        <name>ATP</name>
        <dbReference type="ChEBI" id="CHEBI:30616"/>
    </ligand>
</feature>
<feature type="binding site" evidence="1">
    <location>
        <position position="97"/>
    </location>
    <ligand>
        <name>ATP</name>
        <dbReference type="ChEBI" id="CHEBI:30616"/>
    </ligand>
</feature>
<feature type="binding site" evidence="1">
    <location>
        <begin position="122"/>
        <end position="128"/>
    </location>
    <ligand>
        <name>ATP</name>
        <dbReference type="ChEBI" id="CHEBI:30616"/>
    </ligand>
</feature>
<feature type="site" description="Transition state stabilizer" evidence="1">
    <location>
        <position position="16"/>
    </location>
</feature>
<comment type="function">
    <text evidence="1">Reversibly transfers an adenylyl group from ATP to 4'-phosphopantetheine, yielding dephospho-CoA (dPCoA) and pyrophosphate.</text>
</comment>
<comment type="catalytic activity">
    <reaction evidence="1">
        <text>(R)-4'-phosphopantetheine + ATP + H(+) = 3'-dephospho-CoA + diphosphate</text>
        <dbReference type="Rhea" id="RHEA:19801"/>
        <dbReference type="ChEBI" id="CHEBI:15378"/>
        <dbReference type="ChEBI" id="CHEBI:30616"/>
        <dbReference type="ChEBI" id="CHEBI:33019"/>
        <dbReference type="ChEBI" id="CHEBI:57328"/>
        <dbReference type="ChEBI" id="CHEBI:61723"/>
        <dbReference type="EC" id="2.7.7.3"/>
    </reaction>
</comment>
<comment type="cofactor">
    <cofactor evidence="1">
        <name>Mg(2+)</name>
        <dbReference type="ChEBI" id="CHEBI:18420"/>
    </cofactor>
</comment>
<comment type="pathway">
    <text evidence="1">Cofactor biosynthesis; coenzyme A biosynthesis; CoA from (R)-pantothenate: step 4/5.</text>
</comment>
<comment type="subunit">
    <text evidence="1">Homohexamer.</text>
</comment>
<comment type="subcellular location">
    <subcellularLocation>
        <location evidence="1">Cytoplasm</location>
    </subcellularLocation>
</comment>
<comment type="similarity">
    <text evidence="1">Belongs to the bacterial CoaD family.</text>
</comment>
<name>COAD_SYNJB</name>
<evidence type="ECO:0000255" key="1">
    <source>
        <dbReference type="HAMAP-Rule" id="MF_00151"/>
    </source>
</evidence>
<sequence>MIALYPGSFDPITLGHLDVIERASRLFSKVIVAVLKNPNKTPLFSPEQRQAQISLSTAHLKNVEVDTFSGLTVAYARQRGAKVIVRGLRVLSDFDVELQMAHTNKLLAPELETLFLATASEHSFVSSSLVKEVAKLGGPIDHLVPAPVIRDLRERFPLA</sequence>
<keyword id="KW-0067">ATP-binding</keyword>
<keyword id="KW-0173">Coenzyme A biosynthesis</keyword>
<keyword id="KW-0963">Cytoplasm</keyword>
<keyword id="KW-0460">Magnesium</keyword>
<keyword id="KW-0547">Nucleotide-binding</keyword>
<keyword id="KW-0548">Nucleotidyltransferase</keyword>
<keyword id="KW-1185">Reference proteome</keyword>
<keyword id="KW-0808">Transferase</keyword>